<name>RRF_CUPTR</name>
<proteinExistence type="inferred from homology"/>
<organism>
    <name type="scientific">Cupriavidus taiwanensis (strain DSM 17343 / BCRC 17206 / CCUG 44338 / CIP 107171 / LMG 19424 / R1)</name>
    <name type="common">Ralstonia taiwanensis (strain LMG 19424)</name>
    <dbReference type="NCBI Taxonomy" id="977880"/>
    <lineage>
        <taxon>Bacteria</taxon>
        <taxon>Pseudomonadati</taxon>
        <taxon>Pseudomonadota</taxon>
        <taxon>Betaproteobacteria</taxon>
        <taxon>Burkholderiales</taxon>
        <taxon>Burkholderiaceae</taxon>
        <taxon>Cupriavidus</taxon>
    </lineage>
</organism>
<protein>
    <recommendedName>
        <fullName evidence="1">Ribosome-recycling factor</fullName>
        <shortName evidence="1">RRF</shortName>
    </recommendedName>
    <alternativeName>
        <fullName evidence="1">Ribosome-releasing factor</fullName>
    </alternativeName>
</protein>
<comment type="function">
    <text evidence="1">Responsible for the release of ribosomes from messenger RNA at the termination of protein biosynthesis. May increase the efficiency of translation by recycling ribosomes from one round of translation to another.</text>
</comment>
<comment type="subcellular location">
    <subcellularLocation>
        <location evidence="1">Cytoplasm</location>
    </subcellularLocation>
</comment>
<comment type="similarity">
    <text evidence="1">Belongs to the RRF family.</text>
</comment>
<keyword id="KW-0963">Cytoplasm</keyword>
<keyword id="KW-0648">Protein biosynthesis</keyword>
<gene>
    <name evidence="1" type="primary">frr</name>
    <name type="ordered locus">RALTA_A1688</name>
</gene>
<evidence type="ECO:0000255" key="1">
    <source>
        <dbReference type="HAMAP-Rule" id="MF_00040"/>
    </source>
</evidence>
<accession>B3R2B4</accession>
<sequence>MSVADTKKSAEQKMQKSIEAFKADLAKIRTGRAHTGLLDHVQVDYYGSMVPISQVAAIGLADARTITVQPWEKKMVSAVEKAIRDCDLGLNPATMGEVIRVPMPALTEERRKELTKVVKGEAEGAKVAVRNLRRDANEQFKKLVKDKTISEDEERRGQDEVQKLTDKYVAEIDRMVAEKEKEIMTV</sequence>
<reference key="1">
    <citation type="journal article" date="2008" name="Genome Res.">
        <title>Genome sequence of the beta-rhizobium Cupriavidus taiwanensis and comparative genomics of rhizobia.</title>
        <authorList>
            <person name="Amadou C."/>
            <person name="Pascal G."/>
            <person name="Mangenot S."/>
            <person name="Glew M."/>
            <person name="Bontemps C."/>
            <person name="Capela D."/>
            <person name="Carrere S."/>
            <person name="Cruveiller S."/>
            <person name="Dossat C."/>
            <person name="Lajus A."/>
            <person name="Marchetti M."/>
            <person name="Poinsot V."/>
            <person name="Rouy Z."/>
            <person name="Servin B."/>
            <person name="Saad M."/>
            <person name="Schenowitz C."/>
            <person name="Barbe V."/>
            <person name="Batut J."/>
            <person name="Medigue C."/>
            <person name="Masson-Boivin C."/>
        </authorList>
    </citation>
    <scope>NUCLEOTIDE SEQUENCE [LARGE SCALE GENOMIC DNA]</scope>
    <source>
        <strain>DSM 17343 / BCRC 17206 / CCUG 44338 / CIP 107171 / LMG 19424 / R1</strain>
    </source>
</reference>
<dbReference type="EMBL" id="CU633749">
    <property type="protein sequence ID" value="CAQ69631.1"/>
    <property type="molecule type" value="Genomic_DNA"/>
</dbReference>
<dbReference type="RefSeq" id="WP_012352951.1">
    <property type="nucleotide sequence ID" value="NC_010528.1"/>
</dbReference>
<dbReference type="SMR" id="B3R2B4"/>
<dbReference type="GeneID" id="29762964"/>
<dbReference type="KEGG" id="cti:RALTA_A1688"/>
<dbReference type="eggNOG" id="COG0233">
    <property type="taxonomic scope" value="Bacteria"/>
</dbReference>
<dbReference type="HOGENOM" id="CLU_073981_2_1_4"/>
<dbReference type="BioCyc" id="CTAI977880:RALTA_RS08115-MONOMER"/>
<dbReference type="Proteomes" id="UP000001692">
    <property type="component" value="Chromosome 1"/>
</dbReference>
<dbReference type="GO" id="GO:0005829">
    <property type="term" value="C:cytosol"/>
    <property type="evidence" value="ECO:0007669"/>
    <property type="project" value="GOC"/>
</dbReference>
<dbReference type="GO" id="GO:0043023">
    <property type="term" value="F:ribosomal large subunit binding"/>
    <property type="evidence" value="ECO:0007669"/>
    <property type="project" value="TreeGrafter"/>
</dbReference>
<dbReference type="GO" id="GO:0002184">
    <property type="term" value="P:cytoplasmic translational termination"/>
    <property type="evidence" value="ECO:0007669"/>
    <property type="project" value="TreeGrafter"/>
</dbReference>
<dbReference type="CDD" id="cd00520">
    <property type="entry name" value="RRF"/>
    <property type="match status" value="1"/>
</dbReference>
<dbReference type="FunFam" id="1.10.132.20:FF:000001">
    <property type="entry name" value="Ribosome-recycling factor"/>
    <property type="match status" value="1"/>
</dbReference>
<dbReference type="FunFam" id="3.30.1360.40:FF:000001">
    <property type="entry name" value="Ribosome-recycling factor"/>
    <property type="match status" value="1"/>
</dbReference>
<dbReference type="Gene3D" id="3.30.1360.40">
    <property type="match status" value="1"/>
</dbReference>
<dbReference type="Gene3D" id="1.10.132.20">
    <property type="entry name" value="Ribosome-recycling factor"/>
    <property type="match status" value="1"/>
</dbReference>
<dbReference type="HAMAP" id="MF_00040">
    <property type="entry name" value="RRF"/>
    <property type="match status" value="1"/>
</dbReference>
<dbReference type="InterPro" id="IPR002661">
    <property type="entry name" value="Ribosome_recyc_fac"/>
</dbReference>
<dbReference type="InterPro" id="IPR023584">
    <property type="entry name" value="Ribosome_recyc_fac_dom"/>
</dbReference>
<dbReference type="InterPro" id="IPR036191">
    <property type="entry name" value="RRF_sf"/>
</dbReference>
<dbReference type="NCBIfam" id="TIGR00496">
    <property type="entry name" value="frr"/>
    <property type="match status" value="1"/>
</dbReference>
<dbReference type="PANTHER" id="PTHR20982:SF3">
    <property type="entry name" value="MITOCHONDRIAL RIBOSOME RECYCLING FACTOR PSEUDO 1"/>
    <property type="match status" value="1"/>
</dbReference>
<dbReference type="PANTHER" id="PTHR20982">
    <property type="entry name" value="RIBOSOME RECYCLING FACTOR"/>
    <property type="match status" value="1"/>
</dbReference>
<dbReference type="Pfam" id="PF01765">
    <property type="entry name" value="RRF"/>
    <property type="match status" value="1"/>
</dbReference>
<dbReference type="SUPFAM" id="SSF55194">
    <property type="entry name" value="Ribosome recycling factor, RRF"/>
    <property type="match status" value="1"/>
</dbReference>
<feature type="chain" id="PRO_1000090733" description="Ribosome-recycling factor">
    <location>
        <begin position="1"/>
        <end position="186"/>
    </location>
</feature>